<sequence length="220" mass="25089">MDYTLTRIDPNGENDRYPLQKQEIVTDPLEQEVNKNVFMGKLHDMVNWGRKNSIWPYNFGLSCCYVEMVTSFTAVHDVARFGAEVLRASPRQADLMVVAGTCFTKMAPVIQRLYDQMLEPKWVISMGACANSGGMYDIYSVVQGVDKFIPVDVYIPGCPPRPEAYMQALMLLQESIGKERRPLSWVVGDQGVYRANMQPERERKRGERIAVTNLRTPDEI</sequence>
<organism>
    <name type="scientific">Salmonella agona (strain SL483)</name>
    <dbReference type="NCBI Taxonomy" id="454166"/>
    <lineage>
        <taxon>Bacteria</taxon>
        <taxon>Pseudomonadati</taxon>
        <taxon>Pseudomonadota</taxon>
        <taxon>Gammaproteobacteria</taxon>
        <taxon>Enterobacterales</taxon>
        <taxon>Enterobacteriaceae</taxon>
        <taxon>Salmonella</taxon>
    </lineage>
</organism>
<keyword id="KW-0004">4Fe-4S</keyword>
<keyword id="KW-0997">Cell inner membrane</keyword>
<keyword id="KW-1003">Cell membrane</keyword>
<keyword id="KW-0408">Iron</keyword>
<keyword id="KW-0411">Iron-sulfur</keyword>
<keyword id="KW-0472">Membrane</keyword>
<keyword id="KW-0479">Metal-binding</keyword>
<keyword id="KW-0520">NAD</keyword>
<keyword id="KW-0874">Quinone</keyword>
<keyword id="KW-1278">Translocase</keyword>
<keyword id="KW-0813">Transport</keyword>
<keyword id="KW-0830">Ubiquinone</keyword>
<proteinExistence type="inferred from homology"/>
<dbReference type="EC" id="7.1.1.-" evidence="1"/>
<dbReference type="EMBL" id="CP001138">
    <property type="protein sequence ID" value="ACH50343.1"/>
    <property type="molecule type" value="Genomic_DNA"/>
</dbReference>
<dbReference type="RefSeq" id="WP_000386728.1">
    <property type="nucleotide sequence ID" value="NC_011149.1"/>
</dbReference>
<dbReference type="SMR" id="B5EZK8"/>
<dbReference type="KEGG" id="sea:SeAg_B2466"/>
<dbReference type="HOGENOM" id="CLU_055737_7_3_6"/>
<dbReference type="Proteomes" id="UP000008819">
    <property type="component" value="Chromosome"/>
</dbReference>
<dbReference type="GO" id="GO:0005886">
    <property type="term" value="C:plasma membrane"/>
    <property type="evidence" value="ECO:0007669"/>
    <property type="project" value="UniProtKB-SubCell"/>
</dbReference>
<dbReference type="GO" id="GO:0045271">
    <property type="term" value="C:respiratory chain complex I"/>
    <property type="evidence" value="ECO:0007669"/>
    <property type="project" value="TreeGrafter"/>
</dbReference>
<dbReference type="GO" id="GO:0051539">
    <property type="term" value="F:4 iron, 4 sulfur cluster binding"/>
    <property type="evidence" value="ECO:0007669"/>
    <property type="project" value="UniProtKB-KW"/>
</dbReference>
<dbReference type="GO" id="GO:0005506">
    <property type="term" value="F:iron ion binding"/>
    <property type="evidence" value="ECO:0007669"/>
    <property type="project" value="UniProtKB-UniRule"/>
</dbReference>
<dbReference type="GO" id="GO:0008137">
    <property type="term" value="F:NADH dehydrogenase (ubiquinone) activity"/>
    <property type="evidence" value="ECO:0007669"/>
    <property type="project" value="InterPro"/>
</dbReference>
<dbReference type="GO" id="GO:0050136">
    <property type="term" value="F:NADH:ubiquinone reductase (non-electrogenic) activity"/>
    <property type="evidence" value="ECO:0007669"/>
    <property type="project" value="UniProtKB-UniRule"/>
</dbReference>
<dbReference type="GO" id="GO:0048038">
    <property type="term" value="F:quinone binding"/>
    <property type="evidence" value="ECO:0007669"/>
    <property type="project" value="UniProtKB-KW"/>
</dbReference>
<dbReference type="GO" id="GO:0009060">
    <property type="term" value="P:aerobic respiration"/>
    <property type="evidence" value="ECO:0007669"/>
    <property type="project" value="TreeGrafter"/>
</dbReference>
<dbReference type="GO" id="GO:0015990">
    <property type="term" value="P:electron transport coupled proton transport"/>
    <property type="evidence" value="ECO:0007669"/>
    <property type="project" value="TreeGrafter"/>
</dbReference>
<dbReference type="FunFam" id="3.40.50.12280:FF:000002">
    <property type="entry name" value="NADH-quinone oxidoreductase subunit B"/>
    <property type="match status" value="1"/>
</dbReference>
<dbReference type="Gene3D" id="3.40.50.12280">
    <property type="match status" value="1"/>
</dbReference>
<dbReference type="HAMAP" id="MF_01356">
    <property type="entry name" value="NDH1_NuoB"/>
    <property type="match status" value="1"/>
</dbReference>
<dbReference type="InterPro" id="IPR006137">
    <property type="entry name" value="NADH_UbQ_OxRdtase-like_20kDa"/>
</dbReference>
<dbReference type="InterPro" id="IPR006138">
    <property type="entry name" value="NADH_UQ_OxRdtase_20Kd_su"/>
</dbReference>
<dbReference type="NCBIfam" id="TIGR01957">
    <property type="entry name" value="nuoB_fam"/>
    <property type="match status" value="1"/>
</dbReference>
<dbReference type="NCBIfam" id="NF005012">
    <property type="entry name" value="PRK06411.1"/>
    <property type="match status" value="1"/>
</dbReference>
<dbReference type="PANTHER" id="PTHR11995">
    <property type="entry name" value="NADH DEHYDROGENASE"/>
    <property type="match status" value="1"/>
</dbReference>
<dbReference type="PANTHER" id="PTHR11995:SF14">
    <property type="entry name" value="NADH DEHYDROGENASE [UBIQUINONE] IRON-SULFUR PROTEIN 7, MITOCHONDRIAL"/>
    <property type="match status" value="1"/>
</dbReference>
<dbReference type="Pfam" id="PF01058">
    <property type="entry name" value="Oxidored_q6"/>
    <property type="match status" value="1"/>
</dbReference>
<dbReference type="SUPFAM" id="SSF56770">
    <property type="entry name" value="HydA/Nqo6-like"/>
    <property type="match status" value="1"/>
</dbReference>
<dbReference type="PROSITE" id="PS01150">
    <property type="entry name" value="COMPLEX1_20K"/>
    <property type="match status" value="1"/>
</dbReference>
<feature type="chain" id="PRO_0000376359" description="NADH-quinone oxidoreductase subunit B">
    <location>
        <begin position="1"/>
        <end position="220"/>
    </location>
</feature>
<feature type="binding site" evidence="1">
    <location>
        <position position="63"/>
    </location>
    <ligand>
        <name>[4Fe-4S] cluster</name>
        <dbReference type="ChEBI" id="CHEBI:49883"/>
    </ligand>
</feature>
<feature type="binding site" evidence="1">
    <location>
        <position position="64"/>
    </location>
    <ligand>
        <name>[4Fe-4S] cluster</name>
        <dbReference type="ChEBI" id="CHEBI:49883"/>
    </ligand>
</feature>
<feature type="binding site" evidence="1">
    <location>
        <position position="129"/>
    </location>
    <ligand>
        <name>[4Fe-4S] cluster</name>
        <dbReference type="ChEBI" id="CHEBI:49883"/>
    </ligand>
</feature>
<feature type="binding site" evidence="1">
    <location>
        <position position="158"/>
    </location>
    <ligand>
        <name>[4Fe-4S] cluster</name>
        <dbReference type="ChEBI" id="CHEBI:49883"/>
    </ligand>
</feature>
<gene>
    <name evidence="1" type="primary">nuoB</name>
    <name type="ordered locus">SeAg_B2466</name>
</gene>
<reference key="1">
    <citation type="journal article" date="2011" name="J. Bacteriol.">
        <title>Comparative genomics of 28 Salmonella enterica isolates: evidence for CRISPR-mediated adaptive sublineage evolution.</title>
        <authorList>
            <person name="Fricke W.F."/>
            <person name="Mammel M.K."/>
            <person name="McDermott P.F."/>
            <person name="Tartera C."/>
            <person name="White D.G."/>
            <person name="Leclerc J.E."/>
            <person name="Ravel J."/>
            <person name="Cebula T.A."/>
        </authorList>
    </citation>
    <scope>NUCLEOTIDE SEQUENCE [LARGE SCALE GENOMIC DNA]</scope>
    <source>
        <strain>SL483</strain>
    </source>
</reference>
<comment type="function">
    <text evidence="1">NDH-1 shuttles electrons from NADH, via FMN and iron-sulfur (Fe-S) centers, to quinones in the respiratory chain. The immediate electron acceptor for the enzyme in this species is believed to be ubiquinone. Couples the redox reaction to proton translocation (for every two electrons transferred, four hydrogen ions are translocated across the cytoplasmic membrane), and thus conserves the redox energy in a proton gradient.</text>
</comment>
<comment type="catalytic activity">
    <reaction evidence="1">
        <text>a quinone + NADH + 5 H(+)(in) = a quinol + NAD(+) + 4 H(+)(out)</text>
        <dbReference type="Rhea" id="RHEA:57888"/>
        <dbReference type="ChEBI" id="CHEBI:15378"/>
        <dbReference type="ChEBI" id="CHEBI:24646"/>
        <dbReference type="ChEBI" id="CHEBI:57540"/>
        <dbReference type="ChEBI" id="CHEBI:57945"/>
        <dbReference type="ChEBI" id="CHEBI:132124"/>
    </reaction>
</comment>
<comment type="cofactor">
    <cofactor evidence="1">
        <name>[4Fe-4S] cluster</name>
        <dbReference type="ChEBI" id="CHEBI:49883"/>
    </cofactor>
    <text evidence="1">Binds 1 [4Fe-4S] cluster.</text>
</comment>
<comment type="subunit">
    <text evidence="1">NDH-1 is composed of 13 different subunits. Subunits NuoB, CD, E, F, and G constitute the peripheral sector of the complex.</text>
</comment>
<comment type="subcellular location">
    <subcellularLocation>
        <location evidence="1">Cell inner membrane</location>
        <topology evidence="1">Peripheral membrane protein</topology>
        <orientation evidence="1">Cytoplasmic side</orientation>
    </subcellularLocation>
</comment>
<comment type="similarity">
    <text evidence="1">Belongs to the complex I 20 kDa subunit family.</text>
</comment>
<accession>B5EZK8</accession>
<name>NUOB_SALA4</name>
<protein>
    <recommendedName>
        <fullName evidence="1">NADH-quinone oxidoreductase subunit B</fullName>
        <ecNumber evidence="1">7.1.1.-</ecNumber>
    </recommendedName>
    <alternativeName>
        <fullName evidence="1">NADH dehydrogenase I subunit B</fullName>
    </alternativeName>
    <alternativeName>
        <fullName evidence="1">NDH-1 subunit B</fullName>
    </alternativeName>
</protein>
<evidence type="ECO:0000255" key="1">
    <source>
        <dbReference type="HAMAP-Rule" id="MF_01356"/>
    </source>
</evidence>